<organism>
    <name type="scientific">Prochlorococcus marinus subsp. pastoris (strain CCMP1986 / NIES-2087 / MED4)</name>
    <dbReference type="NCBI Taxonomy" id="59919"/>
    <lineage>
        <taxon>Bacteria</taxon>
        <taxon>Bacillati</taxon>
        <taxon>Cyanobacteriota</taxon>
        <taxon>Cyanophyceae</taxon>
        <taxon>Synechococcales</taxon>
        <taxon>Prochlorococcaceae</taxon>
        <taxon>Prochlorococcus</taxon>
    </lineage>
</organism>
<sequence>MTDFDTKKLNKKWTIEDSISTYGIDKWGEKYFSINSEGNISISPDNKSQKKIDLFKLVKEFKSREINTPLIIRFNDILKDRIAELNNAFSQAIETYDYKNIYKGVFPIKCNQQRNVLEKIIEYGDRWNFGLEVGSKSELLIGLSILENQKSLLICNGYKDKKYIETAILARKLGKHPIIVIEQRDEVKRIIEAVKDLKATPILGIRSKLSSKSSGRWSKSVGDNSKFGLSIPEIMLTIKELKEANLINEMMLLHFHVGSQISDISVIKDALQEASQIFVELSKLGAPMKYIDVGGGLGIDFDGTKMSSNTSTNYSLQNYANDVIATVKDSCEVNNIQHPIIISESGRAIISHCSVLIFNILGTSHVSSQVKVSDQKKQSLIITNLIETLNQIKNLRDKKEDLSEIIELWNDAKKFKEDCLVAFRLGFICLEERAYAEELTWACAKEIANQLENNEIIHPDLSEITDTLASTYYANLSVFKSIPDTWAINQVFPIIPIHRHLEEPFCKGHFADLTCDSDGKLNNFIDNGKIKSLLNLHPPEKNNDYLIGIFMAGAYQEALGNFHNLFGNTNVIHIDINEDNSYKIKNIIKENSKSEILELLDYSSDNLVESIRVNTESAINNKTLTIQEARKLIDQIETSLRKSSYLSE</sequence>
<comment type="function">
    <text evidence="1">Catalyzes the biosynthesis of agmatine from arginine.</text>
</comment>
<comment type="catalytic activity">
    <reaction evidence="1">
        <text>L-arginine + H(+) = agmatine + CO2</text>
        <dbReference type="Rhea" id="RHEA:17641"/>
        <dbReference type="ChEBI" id="CHEBI:15378"/>
        <dbReference type="ChEBI" id="CHEBI:16526"/>
        <dbReference type="ChEBI" id="CHEBI:32682"/>
        <dbReference type="ChEBI" id="CHEBI:58145"/>
        <dbReference type="EC" id="4.1.1.19"/>
    </reaction>
</comment>
<comment type="cofactor">
    <cofactor evidence="1">
        <name>Mg(2+)</name>
        <dbReference type="ChEBI" id="CHEBI:18420"/>
    </cofactor>
</comment>
<comment type="cofactor">
    <cofactor evidence="1">
        <name>pyridoxal 5'-phosphate</name>
        <dbReference type="ChEBI" id="CHEBI:597326"/>
    </cofactor>
</comment>
<comment type="similarity">
    <text evidence="1">Belongs to the Orn/Lys/Arg decarboxylase class-II family. SpeA subfamily.</text>
</comment>
<proteinExistence type="inferred from homology"/>
<reference key="1">
    <citation type="journal article" date="2003" name="Nature">
        <title>Genome divergence in two Prochlorococcus ecotypes reflects oceanic niche differentiation.</title>
        <authorList>
            <person name="Rocap G."/>
            <person name="Larimer F.W."/>
            <person name="Lamerdin J.E."/>
            <person name="Malfatti S."/>
            <person name="Chain P."/>
            <person name="Ahlgren N.A."/>
            <person name="Arellano A."/>
            <person name="Coleman M."/>
            <person name="Hauser L."/>
            <person name="Hess W.R."/>
            <person name="Johnson Z.I."/>
            <person name="Land M.L."/>
            <person name="Lindell D."/>
            <person name="Post A.F."/>
            <person name="Regala W."/>
            <person name="Shah M."/>
            <person name="Shaw S.L."/>
            <person name="Steglich C."/>
            <person name="Sullivan M.B."/>
            <person name="Ting C.S."/>
            <person name="Tolonen A."/>
            <person name="Webb E.A."/>
            <person name="Zinser E.R."/>
            <person name="Chisholm S.W."/>
        </authorList>
    </citation>
    <scope>NUCLEOTIDE SEQUENCE [LARGE SCALE GENOMIC DNA]</scope>
    <source>
        <strain>CCMP1986 / NIES-2087 / MED4</strain>
    </source>
</reference>
<dbReference type="EC" id="4.1.1.19" evidence="1"/>
<dbReference type="EMBL" id="BX548174">
    <property type="protein sequence ID" value="CAE18504.1"/>
    <property type="molecule type" value="Genomic_DNA"/>
</dbReference>
<dbReference type="RefSeq" id="WP_011131683.1">
    <property type="nucleotide sequence ID" value="NC_005072.1"/>
</dbReference>
<dbReference type="SMR" id="Q7V3M9"/>
<dbReference type="STRING" id="59919.PMM0045"/>
<dbReference type="KEGG" id="pmm:PMM0045"/>
<dbReference type="eggNOG" id="COG1166">
    <property type="taxonomic scope" value="Bacteria"/>
</dbReference>
<dbReference type="HOGENOM" id="CLU_027243_1_0_3"/>
<dbReference type="OrthoDB" id="9802658at2"/>
<dbReference type="Proteomes" id="UP000001026">
    <property type="component" value="Chromosome"/>
</dbReference>
<dbReference type="GO" id="GO:0008792">
    <property type="term" value="F:arginine decarboxylase activity"/>
    <property type="evidence" value="ECO:0007669"/>
    <property type="project" value="UniProtKB-UniRule"/>
</dbReference>
<dbReference type="GO" id="GO:0046872">
    <property type="term" value="F:metal ion binding"/>
    <property type="evidence" value="ECO:0007669"/>
    <property type="project" value="UniProtKB-KW"/>
</dbReference>
<dbReference type="GO" id="GO:0006527">
    <property type="term" value="P:arginine catabolic process"/>
    <property type="evidence" value="ECO:0007669"/>
    <property type="project" value="InterPro"/>
</dbReference>
<dbReference type="GO" id="GO:0008295">
    <property type="term" value="P:spermidine biosynthetic process"/>
    <property type="evidence" value="ECO:0007669"/>
    <property type="project" value="UniProtKB-UniRule"/>
</dbReference>
<dbReference type="CDD" id="cd06830">
    <property type="entry name" value="PLPDE_III_ADC"/>
    <property type="match status" value="1"/>
</dbReference>
<dbReference type="Gene3D" id="1.20.58.930">
    <property type="match status" value="1"/>
</dbReference>
<dbReference type="Gene3D" id="3.20.20.10">
    <property type="entry name" value="Alanine racemase"/>
    <property type="match status" value="1"/>
</dbReference>
<dbReference type="Gene3D" id="2.40.37.10">
    <property type="entry name" value="Lyase, Ornithine Decarboxylase, Chain A, domain 1"/>
    <property type="match status" value="1"/>
</dbReference>
<dbReference type="HAMAP" id="MF_01417">
    <property type="entry name" value="SpeA"/>
    <property type="match status" value="1"/>
</dbReference>
<dbReference type="InterPro" id="IPR009006">
    <property type="entry name" value="Ala_racemase/Decarboxylase_C"/>
</dbReference>
<dbReference type="InterPro" id="IPR040634">
    <property type="entry name" value="Arg_decarb_HB"/>
</dbReference>
<dbReference type="InterPro" id="IPR041128">
    <property type="entry name" value="Arg_decarbox_C"/>
</dbReference>
<dbReference type="InterPro" id="IPR002985">
    <property type="entry name" value="Arg_decrbxlase"/>
</dbReference>
<dbReference type="InterPro" id="IPR022657">
    <property type="entry name" value="De-COase2_CS"/>
</dbReference>
<dbReference type="InterPro" id="IPR022644">
    <property type="entry name" value="De-COase2_N"/>
</dbReference>
<dbReference type="InterPro" id="IPR022653">
    <property type="entry name" value="De-COase2_pyr-phos_BS"/>
</dbReference>
<dbReference type="InterPro" id="IPR000183">
    <property type="entry name" value="Orn/DAP/Arg_de-COase"/>
</dbReference>
<dbReference type="InterPro" id="IPR029066">
    <property type="entry name" value="PLP-binding_barrel"/>
</dbReference>
<dbReference type="NCBIfam" id="NF003763">
    <property type="entry name" value="PRK05354.1"/>
    <property type="match status" value="1"/>
</dbReference>
<dbReference type="NCBIfam" id="TIGR01273">
    <property type="entry name" value="speA"/>
    <property type="match status" value="1"/>
</dbReference>
<dbReference type="PANTHER" id="PTHR43295">
    <property type="entry name" value="ARGININE DECARBOXYLASE"/>
    <property type="match status" value="1"/>
</dbReference>
<dbReference type="PANTHER" id="PTHR43295:SF9">
    <property type="entry name" value="BIOSYNTHETIC ARGININE DECARBOXYLASE"/>
    <property type="match status" value="1"/>
</dbReference>
<dbReference type="Pfam" id="PF17810">
    <property type="entry name" value="Arg_decarb_HB"/>
    <property type="match status" value="1"/>
</dbReference>
<dbReference type="Pfam" id="PF17944">
    <property type="entry name" value="Arg_decarbox_C"/>
    <property type="match status" value="1"/>
</dbReference>
<dbReference type="Pfam" id="PF02784">
    <property type="entry name" value="Orn_Arg_deC_N"/>
    <property type="match status" value="1"/>
</dbReference>
<dbReference type="PIRSF" id="PIRSF001336">
    <property type="entry name" value="Arg_decrbxlase"/>
    <property type="match status" value="1"/>
</dbReference>
<dbReference type="PRINTS" id="PR01180">
    <property type="entry name" value="ARGDCRBXLASE"/>
</dbReference>
<dbReference type="PRINTS" id="PR01179">
    <property type="entry name" value="ODADCRBXLASE"/>
</dbReference>
<dbReference type="SUPFAM" id="SSF50621">
    <property type="entry name" value="Alanine racemase C-terminal domain-like"/>
    <property type="match status" value="1"/>
</dbReference>
<dbReference type="SUPFAM" id="SSF51419">
    <property type="entry name" value="PLP-binding barrel"/>
    <property type="match status" value="1"/>
</dbReference>
<dbReference type="PROSITE" id="PS00878">
    <property type="entry name" value="ODR_DC_2_1"/>
    <property type="match status" value="1"/>
</dbReference>
<dbReference type="PROSITE" id="PS00879">
    <property type="entry name" value="ODR_DC_2_2"/>
    <property type="match status" value="1"/>
</dbReference>
<evidence type="ECO:0000255" key="1">
    <source>
        <dbReference type="HAMAP-Rule" id="MF_01417"/>
    </source>
</evidence>
<feature type="chain" id="PRO_0000149970" description="Biosynthetic arginine decarboxylase">
    <location>
        <begin position="1"/>
        <end position="648"/>
    </location>
</feature>
<feature type="binding site" evidence="1">
    <location>
        <begin position="291"/>
        <end position="301"/>
    </location>
    <ligand>
        <name>substrate</name>
    </ligand>
</feature>
<feature type="modified residue" description="N6-(pyridoxal phosphate)lysine" evidence="1">
    <location>
        <position position="109"/>
    </location>
</feature>
<protein>
    <recommendedName>
        <fullName evidence="1">Biosynthetic arginine decarboxylase</fullName>
        <shortName evidence="1">ADC</shortName>
        <ecNumber evidence="1">4.1.1.19</ecNumber>
    </recommendedName>
</protein>
<keyword id="KW-0210">Decarboxylase</keyword>
<keyword id="KW-0456">Lyase</keyword>
<keyword id="KW-0460">Magnesium</keyword>
<keyword id="KW-0479">Metal-binding</keyword>
<keyword id="KW-0620">Polyamine biosynthesis</keyword>
<keyword id="KW-0663">Pyridoxal phosphate</keyword>
<keyword id="KW-0745">Spermidine biosynthesis</keyword>
<name>SPEA_PROMP</name>
<gene>
    <name evidence="1" type="primary">speA</name>
    <name type="ordered locus">PMM0045</name>
</gene>
<accession>Q7V3M9</accession>